<gene>
    <name type="primary">AP1AR</name>
    <name type="synonym">C4orf16</name>
    <name type="ORF">PRO0971</name>
</gene>
<dbReference type="EMBL" id="AL136628">
    <property type="protein sequence ID" value="CAB66563.1"/>
    <property type="molecule type" value="mRNA"/>
</dbReference>
<dbReference type="EMBL" id="BX647702">
    <property type="protein sequence ID" value="CAH56145.1"/>
    <property type="molecule type" value="mRNA"/>
</dbReference>
<dbReference type="EMBL" id="AK315299">
    <property type="protein sequence ID" value="BAG37704.1"/>
    <property type="molecule type" value="mRNA"/>
</dbReference>
<dbReference type="EMBL" id="AC109347">
    <property type="protein sequence ID" value="AAY40962.1"/>
    <property type="molecule type" value="Genomic_DNA"/>
</dbReference>
<dbReference type="EMBL" id="BC009485">
    <property type="protein sequence ID" value="AAH09485.1"/>
    <property type="molecule type" value="mRNA"/>
</dbReference>
<dbReference type="EMBL" id="AF116612">
    <property type="protein sequence ID" value="AAF71037.1"/>
    <property type="status" value="ALT_INIT"/>
    <property type="molecule type" value="mRNA"/>
</dbReference>
<dbReference type="CCDS" id="CCDS3696.1">
    <molecule id="Q63HQ0-1"/>
</dbReference>
<dbReference type="CCDS" id="CCDS47125.1">
    <molecule id="Q63HQ0-2"/>
</dbReference>
<dbReference type="RefSeq" id="NP_001121898.1">
    <molecule id="Q63HQ0-2"/>
    <property type="nucleotide sequence ID" value="NM_001128426.3"/>
</dbReference>
<dbReference type="RefSeq" id="NP_061039.3">
    <molecule id="Q63HQ0-1"/>
    <property type="nucleotide sequence ID" value="NM_018569.5"/>
</dbReference>
<dbReference type="SMR" id="Q63HQ0"/>
<dbReference type="BioGRID" id="120667">
    <property type="interactions" value="32"/>
</dbReference>
<dbReference type="CORUM" id="Q63HQ0"/>
<dbReference type="ELM" id="Q63HQ0"/>
<dbReference type="FunCoup" id="Q63HQ0">
    <property type="interactions" value="1537"/>
</dbReference>
<dbReference type="IntAct" id="Q63HQ0">
    <property type="interactions" value="12"/>
</dbReference>
<dbReference type="STRING" id="9606.ENSP00000274000"/>
<dbReference type="iPTMnet" id="Q63HQ0"/>
<dbReference type="PhosphoSitePlus" id="Q63HQ0"/>
<dbReference type="SwissPalm" id="Q63HQ0"/>
<dbReference type="BioMuta" id="AP1AR"/>
<dbReference type="DMDM" id="73917693"/>
<dbReference type="jPOST" id="Q63HQ0"/>
<dbReference type="MassIVE" id="Q63HQ0"/>
<dbReference type="PaxDb" id="9606-ENSP00000274000"/>
<dbReference type="PeptideAtlas" id="Q63HQ0"/>
<dbReference type="ProteomicsDB" id="65888">
    <molecule id="Q63HQ0-1"/>
</dbReference>
<dbReference type="ProteomicsDB" id="65889">
    <molecule id="Q63HQ0-2"/>
</dbReference>
<dbReference type="Pumba" id="Q63HQ0"/>
<dbReference type="Antibodypedia" id="48718">
    <property type="antibodies" value="25 antibodies from 10 providers"/>
</dbReference>
<dbReference type="DNASU" id="55435"/>
<dbReference type="Ensembl" id="ENST00000274000.10">
    <molecule id="Q63HQ0-1"/>
    <property type="protein sequence ID" value="ENSP00000274000.5"/>
    <property type="gene ID" value="ENSG00000138660.12"/>
</dbReference>
<dbReference type="Ensembl" id="ENST00000309703.10">
    <molecule id="Q63HQ0-2"/>
    <property type="protein sequence ID" value="ENSP00000309023.6"/>
    <property type="gene ID" value="ENSG00000138660.12"/>
</dbReference>
<dbReference type="GeneID" id="55435"/>
<dbReference type="KEGG" id="hsa:55435"/>
<dbReference type="MANE-Select" id="ENST00000274000.10">
    <property type="protein sequence ID" value="ENSP00000274000.5"/>
    <property type="RefSeq nucleotide sequence ID" value="NM_018569.6"/>
    <property type="RefSeq protein sequence ID" value="NP_061039.3"/>
</dbReference>
<dbReference type="UCSC" id="uc003iaj.6">
    <molecule id="Q63HQ0-1"/>
    <property type="organism name" value="human"/>
</dbReference>
<dbReference type="AGR" id="HGNC:28808"/>
<dbReference type="CTD" id="55435"/>
<dbReference type="DisGeNET" id="55435"/>
<dbReference type="GeneCards" id="AP1AR"/>
<dbReference type="HGNC" id="HGNC:28808">
    <property type="gene designation" value="AP1AR"/>
</dbReference>
<dbReference type="HPA" id="ENSG00000138660">
    <property type="expression patterns" value="Low tissue specificity"/>
</dbReference>
<dbReference type="MIM" id="610851">
    <property type="type" value="gene"/>
</dbReference>
<dbReference type="neXtProt" id="NX_Q63HQ0"/>
<dbReference type="OpenTargets" id="ENSG00000138660"/>
<dbReference type="PharmGKB" id="PA165663153"/>
<dbReference type="VEuPathDB" id="HostDB:ENSG00000138660"/>
<dbReference type="eggNOG" id="ENOG502QQP6">
    <property type="taxonomic scope" value="Eukaryota"/>
</dbReference>
<dbReference type="GeneTree" id="ENSGT00390000002219"/>
<dbReference type="HOGENOM" id="CLU_088812_0_0_1"/>
<dbReference type="InParanoid" id="Q63HQ0"/>
<dbReference type="OMA" id="YAVQRER"/>
<dbReference type="OrthoDB" id="10069720at2759"/>
<dbReference type="PAN-GO" id="Q63HQ0">
    <property type="GO annotations" value="4 GO annotations based on evolutionary models"/>
</dbReference>
<dbReference type="PhylomeDB" id="Q63HQ0"/>
<dbReference type="TreeFam" id="TF335676"/>
<dbReference type="PathwayCommons" id="Q63HQ0"/>
<dbReference type="SignaLink" id="Q63HQ0"/>
<dbReference type="BioGRID-ORCS" id="55435">
    <property type="hits" value="8 hits in 1151 CRISPR screens"/>
</dbReference>
<dbReference type="ChiTaRS" id="AP1AR">
    <property type="organism name" value="human"/>
</dbReference>
<dbReference type="GeneWiki" id="AP1AR"/>
<dbReference type="GenomeRNAi" id="55435"/>
<dbReference type="Pharos" id="Q63HQ0">
    <property type="development level" value="Tbio"/>
</dbReference>
<dbReference type="PRO" id="PR:Q63HQ0"/>
<dbReference type="Proteomes" id="UP000005640">
    <property type="component" value="Chromosome 4"/>
</dbReference>
<dbReference type="RNAct" id="Q63HQ0">
    <property type="molecule type" value="protein"/>
</dbReference>
<dbReference type="Bgee" id="ENSG00000138660">
    <property type="expression patterns" value="Expressed in cortical plate and 193 other cell types or tissues"/>
</dbReference>
<dbReference type="ExpressionAtlas" id="Q63HQ0">
    <property type="expression patterns" value="baseline and differential"/>
</dbReference>
<dbReference type="GO" id="GO:0005829">
    <property type="term" value="C:cytosol"/>
    <property type="evidence" value="ECO:0007669"/>
    <property type="project" value="GOC"/>
</dbReference>
<dbReference type="GO" id="GO:0005769">
    <property type="term" value="C:early endosome"/>
    <property type="evidence" value="ECO:0007669"/>
    <property type="project" value="UniProtKB-SubCell"/>
</dbReference>
<dbReference type="GO" id="GO:0005768">
    <property type="term" value="C:endosome"/>
    <property type="evidence" value="ECO:0000318"/>
    <property type="project" value="GO_Central"/>
</dbReference>
<dbReference type="GO" id="GO:0005794">
    <property type="term" value="C:Golgi apparatus"/>
    <property type="evidence" value="ECO:0000314"/>
    <property type="project" value="HPA"/>
</dbReference>
<dbReference type="GO" id="GO:0005770">
    <property type="term" value="C:late endosome"/>
    <property type="evidence" value="ECO:0007669"/>
    <property type="project" value="UniProtKB-SubCell"/>
</dbReference>
<dbReference type="GO" id="GO:0030133">
    <property type="term" value="C:transport vesicle"/>
    <property type="evidence" value="ECO:0000314"/>
    <property type="project" value="LIFEdb"/>
</dbReference>
<dbReference type="GO" id="GO:0035650">
    <property type="term" value="F:AP-1 adaptor complex binding"/>
    <property type="evidence" value="ECO:0000314"/>
    <property type="project" value="UniProtKB"/>
</dbReference>
<dbReference type="GO" id="GO:0019894">
    <property type="term" value="F:kinesin binding"/>
    <property type="evidence" value="ECO:0000314"/>
    <property type="project" value="UniProtKB"/>
</dbReference>
<dbReference type="GO" id="GO:2000146">
    <property type="term" value="P:negative regulation of cell motility"/>
    <property type="evidence" value="ECO:0007669"/>
    <property type="project" value="Ensembl"/>
</dbReference>
<dbReference type="GO" id="GO:0001920">
    <property type="term" value="P:negative regulation of receptor recycling"/>
    <property type="evidence" value="ECO:0000315"/>
    <property type="project" value="UniProtKB"/>
</dbReference>
<dbReference type="GO" id="GO:1900025">
    <property type="term" value="P:negative regulation of substrate adhesion-dependent cell spreading"/>
    <property type="evidence" value="ECO:0000315"/>
    <property type="project" value="MGI"/>
</dbReference>
<dbReference type="GO" id="GO:0015031">
    <property type="term" value="P:protein transport"/>
    <property type="evidence" value="ECO:0007669"/>
    <property type="project" value="UniProtKB-KW"/>
</dbReference>
<dbReference type="GO" id="GO:0034315">
    <property type="term" value="P:regulation of Arp2/3 complex-mediated actin nucleation"/>
    <property type="evidence" value="ECO:0007669"/>
    <property type="project" value="Ensembl"/>
</dbReference>
<dbReference type="GO" id="GO:0034446">
    <property type="term" value="P:substrate adhesion-dependent cell spreading"/>
    <property type="evidence" value="ECO:0007669"/>
    <property type="project" value="Ensembl"/>
</dbReference>
<dbReference type="GO" id="GO:0048203">
    <property type="term" value="P:vesicle targeting, trans-Golgi to endosome"/>
    <property type="evidence" value="ECO:0000314"/>
    <property type="project" value="UniProtKB"/>
</dbReference>
<dbReference type="InterPro" id="IPR031483">
    <property type="entry name" value="AP1AR"/>
</dbReference>
<dbReference type="PANTHER" id="PTHR34529">
    <property type="entry name" value="AP-1 COMPLEX-ASSOCIATED REGULATORY PROTEIN"/>
    <property type="match status" value="1"/>
</dbReference>
<dbReference type="PANTHER" id="PTHR34529:SF1">
    <property type="entry name" value="AP-1 COMPLEX-ASSOCIATED REGULATORY PROTEIN"/>
    <property type="match status" value="1"/>
</dbReference>
<dbReference type="Pfam" id="PF15745">
    <property type="entry name" value="AP1AR"/>
    <property type="match status" value="1"/>
</dbReference>
<evidence type="ECO:0000255" key="1"/>
<evidence type="ECO:0000256" key="2">
    <source>
        <dbReference type="SAM" id="MobiDB-lite"/>
    </source>
</evidence>
<evidence type="ECO:0000269" key="3">
    <source>
    </source>
</evidence>
<evidence type="ECO:0000269" key="4">
    <source>
    </source>
</evidence>
<evidence type="ECO:0000269" key="5">
    <source>
    </source>
</evidence>
<evidence type="ECO:0000269" key="6">
    <source>
    </source>
</evidence>
<evidence type="ECO:0000269" key="7">
    <source>
    </source>
</evidence>
<evidence type="ECO:0000303" key="8">
    <source>
    </source>
</evidence>
<evidence type="ECO:0000305" key="9"/>
<evidence type="ECO:0007744" key="10">
    <source>
    </source>
</evidence>
<evidence type="ECO:0007744" key="11">
    <source>
    </source>
</evidence>
<reference key="1">
    <citation type="journal article" date="2001" name="Genome Res.">
        <title>Towards a catalog of human genes and proteins: sequencing and analysis of 500 novel complete protein coding human cDNAs.</title>
        <authorList>
            <person name="Wiemann S."/>
            <person name="Weil B."/>
            <person name="Wellenreuther R."/>
            <person name="Gassenhuber J."/>
            <person name="Glassl S."/>
            <person name="Ansorge W."/>
            <person name="Boecher M."/>
            <person name="Bloecker H."/>
            <person name="Bauersachs S."/>
            <person name="Blum H."/>
            <person name="Lauber J."/>
            <person name="Duesterhoeft A."/>
            <person name="Beyer A."/>
            <person name="Koehrer K."/>
            <person name="Strack N."/>
            <person name="Mewes H.-W."/>
            <person name="Ottenwaelder B."/>
            <person name="Obermaier B."/>
            <person name="Tampe J."/>
            <person name="Heubner D."/>
            <person name="Wambutt R."/>
            <person name="Korn B."/>
            <person name="Klein M."/>
            <person name="Poustka A."/>
        </authorList>
    </citation>
    <scope>NUCLEOTIDE SEQUENCE [LARGE SCALE MRNA] (ISOFORM 1)</scope>
    <source>
        <tissue>Endometrium</tissue>
        <tissue>Fetal brain</tissue>
    </source>
</reference>
<reference key="2">
    <citation type="journal article" date="2004" name="Nat. Genet.">
        <title>Complete sequencing and characterization of 21,243 full-length human cDNAs.</title>
        <authorList>
            <person name="Ota T."/>
            <person name="Suzuki Y."/>
            <person name="Nishikawa T."/>
            <person name="Otsuki T."/>
            <person name="Sugiyama T."/>
            <person name="Irie R."/>
            <person name="Wakamatsu A."/>
            <person name="Hayashi K."/>
            <person name="Sato H."/>
            <person name="Nagai K."/>
            <person name="Kimura K."/>
            <person name="Makita H."/>
            <person name="Sekine M."/>
            <person name="Obayashi M."/>
            <person name="Nishi T."/>
            <person name="Shibahara T."/>
            <person name="Tanaka T."/>
            <person name="Ishii S."/>
            <person name="Yamamoto J."/>
            <person name="Saito K."/>
            <person name="Kawai Y."/>
            <person name="Isono Y."/>
            <person name="Nakamura Y."/>
            <person name="Nagahari K."/>
            <person name="Murakami K."/>
            <person name="Yasuda T."/>
            <person name="Iwayanagi T."/>
            <person name="Wagatsuma M."/>
            <person name="Shiratori A."/>
            <person name="Sudo H."/>
            <person name="Hosoiri T."/>
            <person name="Kaku Y."/>
            <person name="Kodaira H."/>
            <person name="Kondo H."/>
            <person name="Sugawara M."/>
            <person name="Takahashi M."/>
            <person name="Kanda K."/>
            <person name="Yokoi T."/>
            <person name="Furuya T."/>
            <person name="Kikkawa E."/>
            <person name="Omura Y."/>
            <person name="Abe K."/>
            <person name="Kamihara K."/>
            <person name="Katsuta N."/>
            <person name="Sato K."/>
            <person name="Tanikawa M."/>
            <person name="Yamazaki M."/>
            <person name="Ninomiya K."/>
            <person name="Ishibashi T."/>
            <person name="Yamashita H."/>
            <person name="Murakawa K."/>
            <person name="Fujimori K."/>
            <person name="Tanai H."/>
            <person name="Kimata M."/>
            <person name="Watanabe M."/>
            <person name="Hiraoka S."/>
            <person name="Chiba Y."/>
            <person name="Ishida S."/>
            <person name="Ono Y."/>
            <person name="Takiguchi S."/>
            <person name="Watanabe S."/>
            <person name="Yosida M."/>
            <person name="Hotuta T."/>
            <person name="Kusano J."/>
            <person name="Kanehori K."/>
            <person name="Takahashi-Fujii A."/>
            <person name="Hara H."/>
            <person name="Tanase T.-O."/>
            <person name="Nomura Y."/>
            <person name="Togiya S."/>
            <person name="Komai F."/>
            <person name="Hara R."/>
            <person name="Takeuchi K."/>
            <person name="Arita M."/>
            <person name="Imose N."/>
            <person name="Musashino K."/>
            <person name="Yuuki H."/>
            <person name="Oshima A."/>
            <person name="Sasaki N."/>
            <person name="Aotsuka S."/>
            <person name="Yoshikawa Y."/>
            <person name="Matsunawa H."/>
            <person name="Ichihara T."/>
            <person name="Shiohata N."/>
            <person name="Sano S."/>
            <person name="Moriya S."/>
            <person name="Momiyama H."/>
            <person name="Satoh N."/>
            <person name="Takami S."/>
            <person name="Terashima Y."/>
            <person name="Suzuki O."/>
            <person name="Nakagawa S."/>
            <person name="Senoh A."/>
            <person name="Mizoguchi H."/>
            <person name="Goto Y."/>
            <person name="Shimizu F."/>
            <person name="Wakebe H."/>
            <person name="Hishigaki H."/>
            <person name="Watanabe T."/>
            <person name="Sugiyama A."/>
            <person name="Takemoto M."/>
            <person name="Kawakami B."/>
            <person name="Yamazaki M."/>
            <person name="Watanabe K."/>
            <person name="Kumagai A."/>
            <person name="Itakura S."/>
            <person name="Fukuzumi Y."/>
            <person name="Fujimori Y."/>
            <person name="Komiyama M."/>
            <person name="Tashiro H."/>
            <person name="Tanigami A."/>
            <person name="Fujiwara T."/>
            <person name="Ono T."/>
            <person name="Yamada K."/>
            <person name="Fujii Y."/>
            <person name="Ozaki K."/>
            <person name="Hirao M."/>
            <person name="Ohmori Y."/>
            <person name="Kawabata A."/>
            <person name="Hikiji T."/>
            <person name="Kobatake N."/>
            <person name="Inagaki H."/>
            <person name="Ikema Y."/>
            <person name="Okamoto S."/>
            <person name="Okitani R."/>
            <person name="Kawakami T."/>
            <person name="Noguchi S."/>
            <person name="Itoh T."/>
            <person name="Shigeta K."/>
            <person name="Senba T."/>
            <person name="Matsumura K."/>
            <person name="Nakajima Y."/>
            <person name="Mizuno T."/>
            <person name="Morinaga M."/>
            <person name="Sasaki M."/>
            <person name="Togashi T."/>
            <person name="Oyama M."/>
            <person name="Hata H."/>
            <person name="Watanabe M."/>
            <person name="Komatsu T."/>
            <person name="Mizushima-Sugano J."/>
            <person name="Satoh T."/>
            <person name="Shirai Y."/>
            <person name="Takahashi Y."/>
            <person name="Nakagawa K."/>
            <person name="Okumura K."/>
            <person name="Nagase T."/>
            <person name="Nomura N."/>
            <person name="Kikuchi H."/>
            <person name="Masuho Y."/>
            <person name="Yamashita R."/>
            <person name="Nakai K."/>
            <person name="Yada T."/>
            <person name="Nakamura Y."/>
            <person name="Ohara O."/>
            <person name="Isogai T."/>
            <person name="Sugano S."/>
        </authorList>
    </citation>
    <scope>NUCLEOTIDE SEQUENCE [LARGE SCALE MRNA] (ISOFORM 1)</scope>
</reference>
<reference key="3">
    <citation type="journal article" date="2005" name="Nature">
        <title>Generation and annotation of the DNA sequences of human chromosomes 2 and 4.</title>
        <authorList>
            <person name="Hillier L.W."/>
            <person name="Graves T.A."/>
            <person name="Fulton R.S."/>
            <person name="Fulton L.A."/>
            <person name="Pepin K.H."/>
            <person name="Minx P."/>
            <person name="Wagner-McPherson C."/>
            <person name="Layman D."/>
            <person name="Wylie K."/>
            <person name="Sekhon M."/>
            <person name="Becker M.C."/>
            <person name="Fewell G.A."/>
            <person name="Delehaunty K.D."/>
            <person name="Miner T.L."/>
            <person name="Nash W.E."/>
            <person name="Kremitzki C."/>
            <person name="Oddy L."/>
            <person name="Du H."/>
            <person name="Sun H."/>
            <person name="Bradshaw-Cordum H."/>
            <person name="Ali J."/>
            <person name="Carter J."/>
            <person name="Cordes M."/>
            <person name="Harris A."/>
            <person name="Isak A."/>
            <person name="van Brunt A."/>
            <person name="Nguyen C."/>
            <person name="Du F."/>
            <person name="Courtney L."/>
            <person name="Kalicki J."/>
            <person name="Ozersky P."/>
            <person name="Abbott S."/>
            <person name="Armstrong J."/>
            <person name="Belter E.A."/>
            <person name="Caruso L."/>
            <person name="Cedroni M."/>
            <person name="Cotton M."/>
            <person name="Davidson T."/>
            <person name="Desai A."/>
            <person name="Elliott G."/>
            <person name="Erb T."/>
            <person name="Fronick C."/>
            <person name="Gaige T."/>
            <person name="Haakenson W."/>
            <person name="Haglund K."/>
            <person name="Holmes A."/>
            <person name="Harkins R."/>
            <person name="Kim K."/>
            <person name="Kruchowski S.S."/>
            <person name="Strong C.M."/>
            <person name="Grewal N."/>
            <person name="Goyea E."/>
            <person name="Hou S."/>
            <person name="Levy A."/>
            <person name="Martinka S."/>
            <person name="Mead K."/>
            <person name="McLellan M.D."/>
            <person name="Meyer R."/>
            <person name="Randall-Maher J."/>
            <person name="Tomlinson C."/>
            <person name="Dauphin-Kohlberg S."/>
            <person name="Kozlowicz-Reilly A."/>
            <person name="Shah N."/>
            <person name="Swearengen-Shahid S."/>
            <person name="Snider J."/>
            <person name="Strong J.T."/>
            <person name="Thompson J."/>
            <person name="Yoakum M."/>
            <person name="Leonard S."/>
            <person name="Pearman C."/>
            <person name="Trani L."/>
            <person name="Radionenko M."/>
            <person name="Waligorski J.E."/>
            <person name="Wang C."/>
            <person name="Rock S.M."/>
            <person name="Tin-Wollam A.-M."/>
            <person name="Maupin R."/>
            <person name="Latreille P."/>
            <person name="Wendl M.C."/>
            <person name="Yang S.-P."/>
            <person name="Pohl C."/>
            <person name="Wallis J.W."/>
            <person name="Spieth J."/>
            <person name="Bieri T.A."/>
            <person name="Berkowicz N."/>
            <person name="Nelson J.O."/>
            <person name="Osborne J."/>
            <person name="Ding L."/>
            <person name="Meyer R."/>
            <person name="Sabo A."/>
            <person name="Shotland Y."/>
            <person name="Sinha P."/>
            <person name="Wohldmann P.E."/>
            <person name="Cook L.L."/>
            <person name="Hickenbotham M.T."/>
            <person name="Eldred J."/>
            <person name="Williams D."/>
            <person name="Jones T.A."/>
            <person name="She X."/>
            <person name="Ciccarelli F.D."/>
            <person name="Izaurralde E."/>
            <person name="Taylor J."/>
            <person name="Schmutz J."/>
            <person name="Myers R.M."/>
            <person name="Cox D.R."/>
            <person name="Huang X."/>
            <person name="McPherson J.D."/>
            <person name="Mardis E.R."/>
            <person name="Clifton S.W."/>
            <person name="Warren W.C."/>
            <person name="Chinwalla A.T."/>
            <person name="Eddy S.R."/>
            <person name="Marra M.A."/>
            <person name="Ovcharenko I."/>
            <person name="Furey T.S."/>
            <person name="Miller W."/>
            <person name="Eichler E.E."/>
            <person name="Bork P."/>
            <person name="Suyama M."/>
            <person name="Torrents D."/>
            <person name="Waterston R.H."/>
            <person name="Wilson R.K."/>
        </authorList>
    </citation>
    <scope>NUCLEOTIDE SEQUENCE [LARGE SCALE GENOMIC DNA]</scope>
</reference>
<reference key="4">
    <citation type="journal article" date="2004" name="Genome Res.">
        <title>The status, quality, and expansion of the NIH full-length cDNA project: the Mammalian Gene Collection (MGC).</title>
        <authorList>
            <consortium name="The MGC Project Team"/>
        </authorList>
    </citation>
    <scope>NUCLEOTIDE SEQUENCE [LARGE SCALE MRNA] (ISOFORM 2)</scope>
    <source>
        <tissue>Pancreas</tissue>
    </source>
</reference>
<reference key="5">
    <citation type="submission" date="1998-12" db="EMBL/GenBank/DDBJ databases">
        <title>Functional prediction of the coding sequences of 121 new genes deduced by analysis of cDNA clones from human fetal liver.</title>
        <authorList>
            <person name="Zhang C."/>
            <person name="Yu Y."/>
            <person name="Zhang S."/>
            <person name="Wei H."/>
            <person name="Zhou G."/>
            <person name="Ouyang S."/>
            <person name="Luo L."/>
            <person name="Bi J."/>
            <person name="Liu M."/>
            <person name="He F."/>
        </authorList>
    </citation>
    <scope>NUCLEOTIDE SEQUENCE [LARGE SCALE MRNA] OF 166-302</scope>
    <source>
        <tissue>Fetal liver</tissue>
    </source>
</reference>
<reference key="6">
    <citation type="journal article" date="2004" name="Anal. Chem.">
        <title>Robust phosphoproteomic profiling of tyrosine phosphorylation sites from human T cells using immobilized metal affinity chromatography and tandem mass spectrometry.</title>
        <authorList>
            <person name="Brill L.M."/>
            <person name="Salomon A.R."/>
            <person name="Ficarro S.B."/>
            <person name="Mukherji M."/>
            <person name="Stettler-Gill M."/>
            <person name="Peters E.C."/>
        </authorList>
    </citation>
    <scope>IDENTIFICATION BY MASS SPECTROMETRY [LARGE SCALE ANALYSIS]</scope>
    <source>
        <tissue>Leukemic T-cell</tissue>
    </source>
</reference>
<reference key="7">
    <citation type="journal article" date="2005" name="EMBO J.">
        <title>Gamma-BAR, a novel AP-1-interacting protein involved in post-Golgi trafficking.</title>
        <authorList>
            <person name="Neubrand V.E."/>
            <person name="Will R.D."/>
            <person name="Moebius W."/>
            <person name="Poustka A."/>
            <person name="Wiemann S."/>
            <person name="Schu P."/>
            <person name="Dotti C.G."/>
            <person name="Pepperkok R."/>
            <person name="Simpson J.C."/>
        </authorList>
    </citation>
    <scope>FUNCTION</scope>
    <scope>SUBCELLULAR LOCATION</scope>
    <scope>INTERACTION WITH AP1G1</scope>
</reference>
<reference key="8">
    <citation type="journal article" date="2008" name="Proc. Natl. Acad. Sci. U.S.A.">
        <title>A quantitative atlas of mitotic phosphorylation.</title>
        <authorList>
            <person name="Dephoure N."/>
            <person name="Zhou C."/>
            <person name="Villen J."/>
            <person name="Beausoleil S.A."/>
            <person name="Bakalarski C.E."/>
            <person name="Elledge S.J."/>
            <person name="Gygi S.P."/>
        </authorList>
    </citation>
    <scope>PHOSPHORYLATION [LARGE SCALE ANALYSIS] AT THR-228</scope>
    <scope>IDENTIFICATION BY MASS SPECTROMETRY [LARGE SCALE ANALYSIS]</scope>
    <source>
        <tissue>Cervix carcinoma</tissue>
    </source>
</reference>
<reference key="9">
    <citation type="journal article" date="2009" name="Nat. Biotechnol.">
        <title>Mass-spectrometric identification and relative quantification of N-linked cell surface glycoproteins.</title>
        <authorList>
            <person name="Wollscheid B."/>
            <person name="Bausch-Fluck D."/>
            <person name="Henderson C."/>
            <person name="O'Brien R."/>
            <person name="Bibel M."/>
            <person name="Schiess R."/>
            <person name="Aebersold R."/>
            <person name="Watts J.D."/>
        </authorList>
    </citation>
    <scope>IDENTIFICATION BY MASS SPECTROMETRY</scope>
    <source>
        <tissue>Leukemic T-cell</tissue>
    </source>
</reference>
<reference key="10">
    <citation type="journal article" date="2009" name="Proc. Natl. Acad. Sci. U.S.A.">
        <title>Regulation of endosomal membrane traffic by a Gadkin/AP-1/kinesin KIF5 complex.</title>
        <authorList>
            <person name="Schmidt M.R."/>
            <person name="Maritzen T."/>
            <person name="Kukhtina V."/>
            <person name="Higman V.A."/>
            <person name="Doglio L."/>
            <person name="Barak N.N."/>
            <person name="Strauss H."/>
            <person name="Oschkinat H."/>
            <person name="Dotti C.G."/>
            <person name="Haucke V."/>
        </authorList>
    </citation>
    <scope>FUNCTION</scope>
    <scope>INTERACTION WITH AP1G1; KIF5B AND KLC2</scope>
    <scope>MUTAGENESIS OF TRP-210</scope>
</reference>
<reference key="11">
    <citation type="journal article" date="2010" name="J. Biol. Chem.">
        <title>A novel subtype of AP-1-binding motif within the palmitoylated trans-Golgi network/endosomal accessory protein Gadkin/gamma-BAR.</title>
        <authorList>
            <person name="Maritzen T."/>
            <person name="Schmidt M.R."/>
            <person name="Kukhtina V."/>
            <person name="Higman V.A."/>
            <person name="Strauss H."/>
            <person name="Volkmer R."/>
            <person name="Oschkinat H."/>
            <person name="Dotti C.G."/>
            <person name="Haucke V."/>
        </authorList>
    </citation>
    <scope>PALMITOYLATION</scope>
    <scope>SUBCELLULAR LOCATION</scope>
    <scope>INTERACTION WITH AP1G1</scope>
    <scope>MUTAGENESIS OF 4-CYS-CYS-5; CYS-9; TRP-260 AND PHE-264</scope>
</reference>
<reference key="12">
    <citation type="journal article" date="2011" name="Mol. Biol. Cell">
        <title>Role of AP1 and Gadkin in the traffic of secretory endo-lysosomes.</title>
        <authorList>
            <person name="Laulagnier K."/>
            <person name="Schieber N.L."/>
            <person name="Maritzen T."/>
            <person name="Haucke V."/>
            <person name="Parton R.G."/>
            <person name="Gruenberg J."/>
        </authorList>
    </citation>
    <scope>FUNCTION</scope>
    <scope>SUBCELLULAR LOCATION</scope>
</reference>
<reference key="13">
    <citation type="journal article" date="2012" name="Proc. Natl. Acad. Sci. U.S.A.">
        <title>Gadkin negatively regulates cell spreading and motility via sequestration of the actin-nucleating ARP2/3 complex.</title>
        <authorList>
            <person name="Maritzen T."/>
            <person name="Zech T."/>
            <person name="Schmidt M.R."/>
            <person name="Krause E."/>
            <person name="Machesky L.M."/>
            <person name="Haucke V."/>
        </authorList>
    </citation>
    <scope>FUNCTION</scope>
    <scope>ASSOCIATION WITH THE ARP2/3 COMPLEX</scope>
    <scope>SUBCELLULAR LOCATION</scope>
    <scope>MUTAGENESIS OF TRP-210</scope>
</reference>
<reference key="14">
    <citation type="journal article" date="2013" name="J. Proteome Res.">
        <title>Toward a comprehensive characterization of a human cancer cell phosphoproteome.</title>
        <authorList>
            <person name="Zhou H."/>
            <person name="Di Palma S."/>
            <person name="Preisinger C."/>
            <person name="Peng M."/>
            <person name="Polat A.N."/>
            <person name="Heck A.J."/>
            <person name="Mohammed S."/>
        </authorList>
    </citation>
    <scope>PHOSPHORYLATION [LARGE SCALE ANALYSIS] AT SER-29; SER-226 AND THR-228</scope>
    <scope>IDENTIFICATION BY MASS SPECTROMETRY [LARGE SCALE ANALYSIS]</scope>
    <source>
        <tissue>Cervix carcinoma</tissue>
        <tissue>Erythroleukemia</tissue>
    </source>
</reference>
<comment type="function">
    <text evidence="3 4 6 7">Necessary for adaptor protein complex 1 (AP-1)-dependent transport between the trans-Golgi network and endosomes. Regulates the membrane association of AP1G1/gamma1-adaptin, one of the subunits of the AP-1 adaptor complex. The direct interaction with AP1G1/gamma1-adaptin attenuates the release of the AP-1 complex from membranes. Regulates endosomal membrane traffic via association with AP-1 and KIF5B thus linking kinesin-based plus-end-directed microtubular transport to AP-1-dependent membrane traffic. May act as effector of AP-1 in calcium-induced endo-lysosome secretion. Inhibits Arp2/3 complex function; negatively regulates cell spreading, size and motility via intracellular sequestration of the Arp2/3 complex.</text>
</comment>
<comment type="subunit">
    <text evidence="3 4 5">Interacts (via coiled-coil domain) with AP1G1 (via GAE domain). Interacts with KIF5B. Associates with the Arp2/3 complex.</text>
</comment>
<comment type="interaction">
    <interactant intactId="EBI-12016808">
        <id>Q63HQ0-2</id>
    </interactant>
    <interactant intactId="EBI-11979975">
        <id>Q07866-2</id>
        <label>KLC1</label>
    </interactant>
    <organismsDiffer>false</organismsDiffer>
    <experiments>3</experiments>
</comment>
<comment type="subcellular location">
    <subcellularLocation>
        <location>Golgi apparatus</location>
        <location>trans-Golgi network</location>
    </subcellularLocation>
    <subcellularLocation>
        <location>Late endosome</location>
    </subcellularLocation>
    <subcellularLocation>
        <location>Early endosome</location>
    </subcellularLocation>
    <text>Localizes to the juxta-nuclear Golgi region and to tubular structures throughout the cytoplasm, which are highly mobile and cycle between the juxta-nuclear area and the cell periphery.</text>
</comment>
<comment type="alternative products">
    <event type="alternative splicing"/>
    <isoform>
        <id>Q63HQ0-1</id>
        <name>1</name>
        <sequence type="displayed"/>
    </isoform>
    <isoform>
        <id>Q63HQ0-2</id>
        <name>2</name>
        <sequence type="described" ref="VSP_015339"/>
    </isoform>
</comment>
<comment type="PTM">
    <text evidence="5">Palmitoylated.</text>
</comment>
<comment type="sequence caution" evidence="9">
    <conflict type="erroneous initiation">
        <sequence resource="EMBL-CDS" id="AAF71037"/>
    </conflict>
    <text>Truncated N-terminus.</text>
</comment>
<proteinExistence type="evidence at protein level"/>
<accession>Q63HQ0</accession>
<accession>B2RCV7</accession>
<accession>Q96GG6</accession>
<accession>Q9H0V0</accession>
<accession>Q9P1L4</accession>
<protein>
    <recommendedName>
        <fullName>AP-1 complex-associated regulatory protein</fullName>
    </recommendedName>
    <alternativeName>
        <fullName>2c18</fullName>
    </alternativeName>
    <alternativeName>
        <fullName>Adaptor-related protein complex 1-associated regulatory protein</fullName>
    </alternativeName>
    <alternativeName>
        <fullName>Gamma-1-adaptin brefeldin A resistance protein</fullName>
        <shortName>GBAR</shortName>
        <shortName>Gamma-BAR</shortName>
    </alternativeName>
    <alternativeName>
        <fullName>Gamma-A1-adaptin and kinesin interactor</fullName>
        <shortName>Gadkin</shortName>
    </alternativeName>
</protein>
<organism>
    <name type="scientific">Homo sapiens</name>
    <name type="common">Human</name>
    <dbReference type="NCBI Taxonomy" id="9606"/>
    <lineage>
        <taxon>Eukaryota</taxon>
        <taxon>Metazoa</taxon>
        <taxon>Chordata</taxon>
        <taxon>Craniata</taxon>
        <taxon>Vertebrata</taxon>
        <taxon>Euteleostomi</taxon>
        <taxon>Mammalia</taxon>
        <taxon>Eutheria</taxon>
        <taxon>Euarchontoglires</taxon>
        <taxon>Primates</taxon>
        <taxon>Haplorrhini</taxon>
        <taxon>Catarrhini</taxon>
        <taxon>Hominidae</taxon>
        <taxon>Homo</taxon>
    </lineage>
</organism>
<sequence>MGNCCWTQCFGLLRKEAGRLQRVGGGGGSKYFRTCSRGEHLTIEFENLVESDEGESPGSSHRPLTEEEIVDLRERHYDSIAEKQKDLDKKIQKELALQEEKLRLEEEALYAAQREAARAAKQRKLLEQERQRIVQQYHPSNNGEYQSSGPEDDFESCLRNMKSQYEVFRSSRLSSDATVLTPNTESSCDLMTKTKSTSGNDDSTSLDLEWEDEEGMNRMLPMRERSKTEEDILRAALKYSNKKTGSNPTSASDDSNGLEWENDFVSAEMDDNGNSEYSGFVNPVLELSDSGIRHSDTDQQTR</sequence>
<name>AP1AR_HUMAN</name>
<keyword id="KW-0025">Alternative splicing</keyword>
<keyword id="KW-0175">Coiled coil</keyword>
<keyword id="KW-0967">Endosome</keyword>
<keyword id="KW-0333">Golgi apparatus</keyword>
<keyword id="KW-0449">Lipoprotein</keyword>
<keyword id="KW-0564">Palmitate</keyword>
<keyword id="KW-0597">Phosphoprotein</keyword>
<keyword id="KW-0653">Protein transport</keyword>
<keyword id="KW-1267">Proteomics identification</keyword>
<keyword id="KW-1185">Reference proteome</keyword>
<keyword id="KW-0813">Transport</keyword>
<feature type="chain" id="PRO_0000089432" description="AP-1 complex-associated regulatory protein">
    <location>
        <begin position="1"/>
        <end position="302"/>
    </location>
</feature>
<feature type="region of interest" description="Interaction with AP1G1">
    <location>
        <begin position="78"/>
        <end position="138"/>
    </location>
</feature>
<feature type="region of interest" description="Disordered" evidence="2">
    <location>
        <begin position="188"/>
        <end position="258"/>
    </location>
</feature>
<feature type="region of interest" description="Sufficient for association with the Arp2/3 complex">
    <location>
        <begin position="199"/>
        <end position="215"/>
    </location>
</feature>
<feature type="coiled-coil region" evidence="1">
    <location>
        <begin position="80"/>
        <end position="138"/>
    </location>
</feature>
<feature type="compositionally biased region" description="Polar residues" evidence="2">
    <location>
        <begin position="188"/>
        <end position="206"/>
    </location>
</feature>
<feature type="compositionally biased region" description="Basic and acidic residues" evidence="2">
    <location>
        <begin position="221"/>
        <end position="233"/>
    </location>
</feature>
<feature type="compositionally biased region" description="Polar residues" evidence="2">
    <location>
        <begin position="242"/>
        <end position="255"/>
    </location>
</feature>
<feature type="modified residue" description="Phosphoserine" evidence="11">
    <location>
        <position position="29"/>
    </location>
</feature>
<feature type="modified residue" description="Phosphoserine" evidence="11">
    <location>
        <position position="226"/>
    </location>
</feature>
<feature type="modified residue" description="Phosphothreonine" evidence="10 11">
    <location>
        <position position="228"/>
    </location>
</feature>
<feature type="splice variant" id="VSP_015339" description="In isoform 2." evidence="8">
    <location>
        <begin position="94"/>
        <end position="126"/>
    </location>
</feature>
<feature type="sequence variant" id="VAR_050769" description="In dbSNP:rs34900583.">
    <original>T</original>
    <variation>I</variation>
    <location>
        <position position="297"/>
    </location>
</feature>
<feature type="mutagenesis site" description="Loss of association with membranes, no effect on interaction with AP1G1; when associated with 9-S." evidence="5">
    <original>CC</original>
    <variation>SS</variation>
    <location>
        <begin position="4"/>
        <end position="5"/>
    </location>
</feature>
<feature type="mutagenesis site" description="Loss of association with membranes, no effect on interaction with AP1G1; when associated with 4-S-S-5." evidence="5">
    <original>C</original>
    <variation>S</variation>
    <location>
        <position position="9"/>
    </location>
</feature>
<feature type="mutagenesis site" description="Loss of association with the Arp2/3 complex and endosomal colocalization. Abolishes interaction with KLC2, no effect on interaction with AP1G1." evidence="4 7">
    <original>W</original>
    <variation>A</variation>
    <location>
        <position position="210"/>
    </location>
</feature>
<feature type="mutagenesis site" description="Decreases interaction with AP1G1; when associated with L-264." evidence="5">
    <original>W</original>
    <variation>L</variation>
    <location>
        <position position="260"/>
    </location>
</feature>
<feature type="mutagenesis site" description="Decreases interaction with AP1G1; when associated with L-260." evidence="5">
    <original>F</original>
    <variation>L</variation>
    <location>
        <position position="264"/>
    </location>
</feature>
<feature type="sequence conflict" description="In Ref. 1; CAB66563." evidence="9" ref="1">
    <original>K</original>
    <variation>E</variation>
    <location>
        <position position="89"/>
    </location>
</feature>
<feature type="sequence conflict" description="In Ref. 2; BAG37704." evidence="9" ref="2">
    <original>N</original>
    <variation>D</variation>
    <location>
        <position position="217"/>
    </location>
</feature>
<feature type="sequence conflict" description="In Ref. 4; AAH09485." evidence="9" ref="4">
    <original>K</original>
    <variation>E</variation>
    <location>
        <position position="243"/>
    </location>
</feature>